<accession>P17558</accession>
<accession>D6W2L5</accession>
<comment type="function">
    <text evidence="12 13">Component of the mitochondrial ribosome (mitoribosome), a dedicated translation machinery responsible for the synthesis of mitochondrial genome-encoded proteins, including at least some of the essential transmembrane subunits of the mitochondrial respiratory chain. The mitoribosomes are attached to the mitochondrial inner membrane and translation products are cotranslationally integrated into the membrane.</text>
</comment>
<comment type="subunit">
    <text evidence="2 3 7 9">Component of the mitochondrial small ribosomal subunit (mt-SSU). Mature yeast 74S mitochondrial ribosomes consist of a small (37S) and a large (54S) subunit. The 37S small subunit contains a 15S ribosomal RNA (15S mt-rRNA) and 34 different proteins. The 54S large subunit contains a 21S rRNA (21S mt-rRNA) and 46 different proteins.</text>
</comment>
<comment type="subcellular location">
    <subcellularLocation>
        <location evidence="4 6 7">Mitochondrion</location>
    </subcellularLocation>
    <text evidence="8">Mitoribosomes are tethered to the mitochondrial inner membrane and spatially aligned with the membrane insertion machinery through two distinct membrane contact sites, formed by the 21S rRNA expansion segment 96-ES1 and the inner membrane protein MBA1.</text>
</comment>
<comment type="miscellaneous">
    <text evidence="5">Present with 2010 molecules/cell in log phase SD medium.</text>
</comment>
<comment type="similarity">
    <text evidence="11">Belongs to the mitochondrion-specific ribosomal protein mS26 family.</text>
</comment>
<keyword id="KW-0002">3D-structure</keyword>
<keyword id="KW-0496">Mitochondrion</keyword>
<keyword id="KW-1185">Reference proteome</keyword>
<keyword id="KW-0687">Ribonucleoprotein</keyword>
<keyword id="KW-0689">Ribosomal protein</keyword>
<dbReference type="EMBL" id="X52362">
    <property type="protein sequence ID" value="CAA36588.1"/>
    <property type="molecule type" value="Genomic_DNA"/>
</dbReference>
<dbReference type="EMBL" id="U55020">
    <property type="protein sequence ID" value="AAC49644.1"/>
    <property type="molecule type" value="Genomic_DNA"/>
</dbReference>
<dbReference type="EMBL" id="Z75066">
    <property type="protein sequence ID" value="CAA99364.1"/>
    <property type="molecule type" value="Genomic_DNA"/>
</dbReference>
<dbReference type="EMBL" id="BK006948">
    <property type="protein sequence ID" value="DAA10931.1"/>
    <property type="molecule type" value="Genomic_DNA"/>
</dbReference>
<dbReference type="PIR" id="S25459">
    <property type="entry name" value="S25459"/>
</dbReference>
<dbReference type="RefSeq" id="NP_014801.1">
    <property type="nucleotide sequence ID" value="NM_001183577.1"/>
</dbReference>
<dbReference type="PDB" id="5MRC">
    <property type="method" value="EM"/>
    <property type="resolution" value="3.25 A"/>
    <property type="chains" value="VV=2-234"/>
</dbReference>
<dbReference type="PDB" id="5MRE">
    <property type="method" value="EM"/>
    <property type="resolution" value="3.75 A"/>
    <property type="chains" value="VV=2-234"/>
</dbReference>
<dbReference type="PDB" id="5MRF">
    <property type="method" value="EM"/>
    <property type="resolution" value="4.97 A"/>
    <property type="chains" value="VV=2-234"/>
</dbReference>
<dbReference type="PDB" id="8D8J">
    <property type="method" value="EM"/>
    <property type="resolution" value="3.80 A"/>
    <property type="chains" value="V=1-318"/>
</dbReference>
<dbReference type="PDB" id="8D8K">
    <property type="method" value="EM"/>
    <property type="resolution" value="3.13 A"/>
    <property type="chains" value="V=1-318"/>
</dbReference>
<dbReference type="PDB" id="8D8L">
    <property type="method" value="EM"/>
    <property type="resolution" value="2.60 A"/>
    <property type="chains" value="V=1-318"/>
</dbReference>
<dbReference type="PDB" id="8OM2">
    <property type="method" value="EM"/>
    <property type="resolution" value="2.57 A"/>
    <property type="chains" value="V=1-318"/>
</dbReference>
<dbReference type="PDB" id="8OM3">
    <property type="method" value="EM"/>
    <property type="resolution" value="2.87 A"/>
    <property type="chains" value="V=1-318"/>
</dbReference>
<dbReference type="PDB" id="8OM4">
    <property type="method" value="EM"/>
    <property type="resolution" value="2.32 A"/>
    <property type="chains" value="V=1-318"/>
</dbReference>
<dbReference type="PDBsum" id="5MRC"/>
<dbReference type="PDBsum" id="5MRE"/>
<dbReference type="PDBsum" id="5MRF"/>
<dbReference type="PDBsum" id="8D8J"/>
<dbReference type="PDBsum" id="8D8K"/>
<dbReference type="PDBsum" id="8D8L"/>
<dbReference type="PDBsum" id="8OM2"/>
<dbReference type="PDBsum" id="8OM3"/>
<dbReference type="PDBsum" id="8OM4"/>
<dbReference type="EMDB" id="EMD-16966"/>
<dbReference type="EMDB" id="EMD-16967"/>
<dbReference type="EMDB" id="EMD-16968"/>
<dbReference type="EMDB" id="EMD-27249"/>
<dbReference type="EMDB" id="EMD-27250"/>
<dbReference type="EMDB" id="EMD-27251"/>
<dbReference type="EMDB" id="EMD-3551"/>
<dbReference type="EMDB" id="EMD-3552"/>
<dbReference type="EMDB" id="EMD-3553"/>
<dbReference type="SMR" id="P17558"/>
<dbReference type="BioGRID" id="34554">
    <property type="interactions" value="89"/>
</dbReference>
<dbReference type="ComplexPortal" id="CPX-1603">
    <property type="entry name" value="37S mitochondrial small ribosomal subunit"/>
</dbReference>
<dbReference type="DIP" id="DIP-2916N"/>
<dbReference type="FunCoup" id="P17558">
    <property type="interactions" value="151"/>
</dbReference>
<dbReference type="IntAct" id="P17558">
    <property type="interactions" value="46"/>
</dbReference>
<dbReference type="MINT" id="P17558"/>
<dbReference type="STRING" id="4932.YOR158W"/>
<dbReference type="iPTMnet" id="P17558"/>
<dbReference type="PaxDb" id="4932-YOR158W"/>
<dbReference type="PeptideAtlas" id="P17558"/>
<dbReference type="EnsemblFungi" id="YOR158W_mRNA">
    <property type="protein sequence ID" value="YOR158W"/>
    <property type="gene ID" value="YOR158W"/>
</dbReference>
<dbReference type="GeneID" id="854329"/>
<dbReference type="KEGG" id="sce:YOR158W"/>
<dbReference type="AGR" id="SGD:S000005684"/>
<dbReference type="SGD" id="S000005684">
    <property type="gene designation" value="PET123"/>
</dbReference>
<dbReference type="VEuPathDB" id="FungiDB:YOR158W"/>
<dbReference type="eggNOG" id="ENOG502QTCF">
    <property type="taxonomic scope" value="Eukaryota"/>
</dbReference>
<dbReference type="HOGENOM" id="CLU_079416_0_0_1"/>
<dbReference type="InParanoid" id="P17558"/>
<dbReference type="OMA" id="VGYADNI"/>
<dbReference type="OrthoDB" id="5223508at2759"/>
<dbReference type="BioCyc" id="YEAST:G3O-33675-MONOMER"/>
<dbReference type="BioGRID-ORCS" id="854329">
    <property type="hits" value="5 hits in 10 CRISPR screens"/>
</dbReference>
<dbReference type="PRO" id="PR:P17558"/>
<dbReference type="Proteomes" id="UP000002311">
    <property type="component" value="Chromosome XV"/>
</dbReference>
<dbReference type="RNAct" id="P17558">
    <property type="molecule type" value="protein"/>
</dbReference>
<dbReference type="GO" id="GO:0005743">
    <property type="term" value="C:mitochondrial inner membrane"/>
    <property type="evidence" value="ECO:0000303"/>
    <property type="project" value="ComplexPortal"/>
</dbReference>
<dbReference type="GO" id="GO:0005763">
    <property type="term" value="C:mitochondrial small ribosomal subunit"/>
    <property type="evidence" value="ECO:0000314"/>
    <property type="project" value="SGD"/>
</dbReference>
<dbReference type="GO" id="GO:0005739">
    <property type="term" value="C:mitochondrion"/>
    <property type="evidence" value="ECO:0007005"/>
    <property type="project" value="SGD"/>
</dbReference>
<dbReference type="GO" id="GO:0003735">
    <property type="term" value="F:structural constituent of ribosome"/>
    <property type="evidence" value="ECO:0000314"/>
    <property type="project" value="SGD"/>
</dbReference>
<dbReference type="GO" id="GO:0032543">
    <property type="term" value="P:mitochondrial translation"/>
    <property type="evidence" value="ECO:0000303"/>
    <property type="project" value="ComplexPortal"/>
</dbReference>
<dbReference type="CDD" id="cd23703">
    <property type="entry name" value="mS26_PET12"/>
    <property type="match status" value="1"/>
</dbReference>
<feature type="chain" id="PRO_0000030589" description="Small ribosomal subunit protein mS26">
    <location>
        <begin position="1"/>
        <end position="318"/>
    </location>
</feature>
<feature type="region of interest" description="Disordered" evidence="1">
    <location>
        <begin position="295"/>
        <end position="318"/>
    </location>
</feature>
<feature type="compositionally biased region" description="Low complexity" evidence="1">
    <location>
        <begin position="300"/>
        <end position="318"/>
    </location>
</feature>
<feature type="helix" evidence="15">
    <location>
        <begin position="3"/>
        <end position="8"/>
    </location>
</feature>
<feature type="strand" evidence="14">
    <location>
        <begin position="21"/>
        <end position="24"/>
    </location>
</feature>
<feature type="strand" evidence="15">
    <location>
        <begin position="26"/>
        <end position="28"/>
    </location>
</feature>
<feature type="helix" evidence="15">
    <location>
        <begin position="30"/>
        <end position="36"/>
    </location>
</feature>
<feature type="helix" evidence="15">
    <location>
        <begin position="43"/>
        <end position="45"/>
    </location>
</feature>
<feature type="helix" evidence="15">
    <location>
        <begin position="71"/>
        <end position="78"/>
    </location>
</feature>
<feature type="helix" evidence="15">
    <location>
        <begin position="92"/>
        <end position="142"/>
    </location>
</feature>
<feature type="helix" evidence="15">
    <location>
        <begin position="148"/>
        <end position="152"/>
    </location>
</feature>
<feature type="helix" evidence="15">
    <location>
        <begin position="157"/>
        <end position="161"/>
    </location>
</feature>
<feature type="helix" evidence="15">
    <location>
        <begin position="170"/>
        <end position="205"/>
    </location>
</feature>
<feature type="helix" evidence="15">
    <location>
        <begin position="206"/>
        <end position="208"/>
    </location>
</feature>
<feature type="helix" evidence="15">
    <location>
        <begin position="213"/>
        <end position="225"/>
    </location>
</feature>
<organism>
    <name type="scientific">Saccharomyces cerevisiae (strain ATCC 204508 / S288c)</name>
    <name type="common">Baker's yeast</name>
    <dbReference type="NCBI Taxonomy" id="559292"/>
    <lineage>
        <taxon>Eukaryota</taxon>
        <taxon>Fungi</taxon>
        <taxon>Dikarya</taxon>
        <taxon>Ascomycota</taxon>
        <taxon>Saccharomycotina</taxon>
        <taxon>Saccharomycetes</taxon>
        <taxon>Saccharomycetales</taxon>
        <taxon>Saccharomycetaceae</taxon>
        <taxon>Saccharomyces</taxon>
    </lineage>
</organism>
<gene>
    <name type="primary">PET123</name>
    <name type="ordered locus">YOR158W</name>
</gene>
<protein>
    <recommendedName>
        <fullName evidence="10">Small ribosomal subunit protein mS26</fullName>
    </recommendedName>
    <alternativeName>
        <fullName>37S ribosomal protein PET123, mitochondrial</fullName>
    </alternativeName>
</protein>
<name>RTPT_YEAST</name>
<sequence>MGKGAAKYGFKSGVFPTTRSILKSPTTKQTDIINKVKSPKPKGVLGIGYAKGVKHPKGSHRLSPKVNFIDVDNLIAKTVAEPQSIKSSNGSAQKVRLQKAELRRKFLIEAFRKEEARLLHKHEYLQKRTKELEKAKELELEKLNKEKSSDLTIMTLDKMMSQPLLRNRSPEESELLKLKRNYNRSLLNFQAHKKKLNELLNLYHVANEFIVTESQLLKKIDKVFNDETEEFTDAYDVTSNFTQFGNRKLLLSGNTTLQTQINNAIMGSLSNEKFFDISLVDSYLNKDLKNISNKIDSKLNPTSNGAGNNGNNNNTTNL</sequence>
<reference key="1">
    <citation type="journal article" date="1990" name="Genetics">
        <title>A genetic link between an mRNA-specific translational activator and the translation system in yeast mitochondria.</title>
        <authorList>
            <person name="Haffter P.T."/>
            <person name="McMullin T.W."/>
            <person name="Fox T.D."/>
        </authorList>
    </citation>
    <scope>NUCLEOTIDE SEQUENCE [GENOMIC DNA]</scope>
</reference>
<reference key="2">
    <citation type="journal article" date="1997" name="Yeast">
        <title>Analysis of a 35.6 kb region on the right arm of Saccharomyces cerevisiae chromosome XV.</title>
        <authorList>
            <person name="Bordonne R."/>
            <person name="Camasses A."/>
            <person name="Madania A."/>
            <person name="Poch O."/>
            <person name="Tarassov I.A."/>
            <person name="Winsor B."/>
            <person name="Martin R.P."/>
        </authorList>
    </citation>
    <scope>NUCLEOTIDE SEQUENCE [GENOMIC DNA]</scope>
    <source>
        <strain>S288c / FY1678</strain>
    </source>
</reference>
<reference key="3">
    <citation type="journal article" date="1997" name="Nature">
        <title>The nucleotide sequence of Saccharomyces cerevisiae chromosome XV.</title>
        <authorList>
            <person name="Dujon B."/>
            <person name="Albermann K."/>
            <person name="Aldea M."/>
            <person name="Alexandraki D."/>
            <person name="Ansorge W."/>
            <person name="Arino J."/>
            <person name="Benes V."/>
            <person name="Bohn C."/>
            <person name="Bolotin-Fukuhara M."/>
            <person name="Bordonne R."/>
            <person name="Boyer J."/>
            <person name="Camasses A."/>
            <person name="Casamayor A."/>
            <person name="Casas C."/>
            <person name="Cheret G."/>
            <person name="Cziepluch C."/>
            <person name="Daignan-Fornier B."/>
            <person name="Dang V.-D."/>
            <person name="de Haan M."/>
            <person name="Delius H."/>
            <person name="Durand P."/>
            <person name="Fairhead C."/>
            <person name="Feldmann H."/>
            <person name="Gaillon L."/>
            <person name="Galisson F."/>
            <person name="Gamo F.-J."/>
            <person name="Gancedo C."/>
            <person name="Goffeau A."/>
            <person name="Goulding S.E."/>
            <person name="Grivell L.A."/>
            <person name="Habbig B."/>
            <person name="Hand N.J."/>
            <person name="Hani J."/>
            <person name="Hattenhorst U."/>
            <person name="Hebling U."/>
            <person name="Hernando Y."/>
            <person name="Herrero E."/>
            <person name="Heumann K."/>
            <person name="Hiesel R."/>
            <person name="Hilger F."/>
            <person name="Hofmann B."/>
            <person name="Hollenberg C.P."/>
            <person name="Hughes B."/>
            <person name="Jauniaux J.-C."/>
            <person name="Kalogeropoulos A."/>
            <person name="Katsoulou C."/>
            <person name="Kordes E."/>
            <person name="Lafuente M.J."/>
            <person name="Landt O."/>
            <person name="Louis E.J."/>
            <person name="Maarse A.C."/>
            <person name="Madania A."/>
            <person name="Mannhaupt G."/>
            <person name="Marck C."/>
            <person name="Martin R.P."/>
            <person name="Mewes H.-W."/>
            <person name="Michaux G."/>
            <person name="Paces V."/>
            <person name="Parle-McDermott A.G."/>
            <person name="Pearson B.M."/>
            <person name="Perrin A."/>
            <person name="Pettersson B."/>
            <person name="Poch O."/>
            <person name="Pohl T.M."/>
            <person name="Poirey R."/>
            <person name="Portetelle D."/>
            <person name="Pujol A."/>
            <person name="Purnelle B."/>
            <person name="Ramezani Rad M."/>
            <person name="Rechmann S."/>
            <person name="Schwager C."/>
            <person name="Schweizer M."/>
            <person name="Sor F."/>
            <person name="Sterky F."/>
            <person name="Tarassov I.A."/>
            <person name="Teodoru C."/>
            <person name="Tettelin H."/>
            <person name="Thierry A."/>
            <person name="Tobiasch E."/>
            <person name="Tzermia M."/>
            <person name="Uhlen M."/>
            <person name="Unseld M."/>
            <person name="Valens M."/>
            <person name="Vandenbol M."/>
            <person name="Vetter I."/>
            <person name="Vlcek C."/>
            <person name="Voet M."/>
            <person name="Volckaert G."/>
            <person name="Voss H."/>
            <person name="Wambutt R."/>
            <person name="Wedler H."/>
            <person name="Wiemann S."/>
            <person name="Winsor B."/>
            <person name="Wolfe K.H."/>
            <person name="Zollner A."/>
            <person name="Zumstein E."/>
            <person name="Kleine K."/>
        </authorList>
    </citation>
    <scope>NUCLEOTIDE SEQUENCE [LARGE SCALE GENOMIC DNA]</scope>
    <source>
        <strain>ATCC 204508 / S288c</strain>
    </source>
</reference>
<reference key="4">
    <citation type="journal article" date="2014" name="G3 (Bethesda)">
        <title>The reference genome sequence of Saccharomyces cerevisiae: Then and now.</title>
        <authorList>
            <person name="Engel S.R."/>
            <person name="Dietrich F.S."/>
            <person name="Fisk D.G."/>
            <person name="Binkley G."/>
            <person name="Balakrishnan R."/>
            <person name="Costanzo M.C."/>
            <person name="Dwight S.S."/>
            <person name="Hitz B.C."/>
            <person name="Karra K."/>
            <person name="Nash R.S."/>
            <person name="Weng S."/>
            <person name="Wong E.D."/>
            <person name="Lloyd P."/>
            <person name="Skrzypek M.S."/>
            <person name="Miyasato S.R."/>
            <person name="Simison M."/>
            <person name="Cherry J.M."/>
        </authorList>
    </citation>
    <scope>GENOME REANNOTATION</scope>
    <source>
        <strain>ATCC 204508 / S288c</strain>
    </source>
</reference>
<reference key="5">
    <citation type="journal article" date="1990" name="Mol. Cell. Biol.">
        <title>A novel small-subunit ribosomal protein of yeast mitochondria that interacts functionally with an mRNA-specific translational activator.</title>
        <authorList>
            <person name="McMullin T.W."/>
            <person name="Haffter P."/>
            <person name="Fox T.D."/>
        </authorList>
    </citation>
    <scope>FUNCTION</scope>
    <scope>SUBUNIT</scope>
    <scope>SUBCELLULAR LOCATION</scope>
</reference>
<reference key="6">
    <citation type="journal article" date="2001" name="J. Biol. Chem.">
        <title>Identification of 12 new yeast mitochondrial ribosomal proteins including 6 that have no prokaryotic homologues.</title>
        <authorList>
            <person name="Saveanu C."/>
            <person name="Fromont-Racine M."/>
            <person name="Harington A."/>
            <person name="Ricard F."/>
            <person name="Namane A."/>
            <person name="Jacquier A."/>
        </authorList>
    </citation>
    <scope>IDENTIFICATION IN THE MITOCHONDRIAL RIBOSOMAL SMALL COMPLEX</scope>
    <scope>IDENTIFICATION BY MASS SPECTROMETRY</scope>
</reference>
<reference key="7">
    <citation type="journal article" date="2002" name="Eur. J. Biochem.">
        <title>Tag-mediated isolation of yeast mitochondrial ribosome and mass spectrometric identification of its new components.</title>
        <authorList>
            <person name="Gan X."/>
            <person name="Kitakawa M."/>
            <person name="Yoshino K."/>
            <person name="Oshiro N."/>
            <person name="Yonezawa K."/>
            <person name="Isono K."/>
        </authorList>
    </citation>
    <scope>IDENTIFICATION IN THE MITOCHONDRIAL RIBOSOMAL SMALL COMPLEX</scope>
    <scope>IDENTIFICATION BY MASS SPECTROMETRY</scope>
</reference>
<reference key="8">
    <citation type="journal article" date="2003" name="Nature">
        <title>Global analysis of protein localization in budding yeast.</title>
        <authorList>
            <person name="Huh W.-K."/>
            <person name="Falvo J.V."/>
            <person name="Gerke L.C."/>
            <person name="Carroll A.S."/>
            <person name="Howson R.W."/>
            <person name="Weissman J.S."/>
            <person name="O'Shea E.K."/>
        </authorList>
    </citation>
    <scope>SUBCELLULAR LOCATION [LARGE SCALE ANALYSIS]</scope>
</reference>
<reference key="9">
    <citation type="journal article" date="2003" name="Nature">
        <title>Global analysis of protein expression in yeast.</title>
        <authorList>
            <person name="Ghaemmaghami S."/>
            <person name="Huh W.-K."/>
            <person name="Bower K."/>
            <person name="Howson R.W."/>
            <person name="Belle A."/>
            <person name="Dephoure N."/>
            <person name="O'Shea E.K."/>
            <person name="Weissman J.S."/>
        </authorList>
    </citation>
    <scope>LEVEL OF PROTEIN EXPRESSION [LARGE SCALE ANALYSIS]</scope>
</reference>
<reference key="10">
    <citation type="journal article" date="2003" name="Proc. Natl. Acad. Sci. U.S.A.">
        <title>The proteome of Saccharomyces cerevisiae mitochondria.</title>
        <authorList>
            <person name="Sickmann A."/>
            <person name="Reinders J."/>
            <person name="Wagner Y."/>
            <person name="Joppich C."/>
            <person name="Zahedi R.P."/>
            <person name="Meyer H.E."/>
            <person name="Schoenfisch B."/>
            <person name="Perschil I."/>
            <person name="Chacinska A."/>
            <person name="Guiard B."/>
            <person name="Rehling P."/>
            <person name="Pfanner N."/>
            <person name="Meisinger C."/>
        </authorList>
    </citation>
    <scope>SUBCELLULAR LOCATION [LARGE SCALE ANALYSIS]</scope>
    <source>
        <strain>ATCC 76625 / YPH499</strain>
    </source>
</reference>
<reference key="11">
    <citation type="journal article" date="2012" name="Proc. Natl. Acad. Sci. U.S.A.">
        <title>N-terminal acetylome analyses and functional insights of the N-terminal acetyltransferase NatB.</title>
        <authorList>
            <person name="Van Damme P."/>
            <person name="Lasa M."/>
            <person name="Polevoda B."/>
            <person name="Gazquez C."/>
            <person name="Elosegui-Artola A."/>
            <person name="Kim D.S."/>
            <person name="De Juan-Pardo E."/>
            <person name="Demeyer K."/>
            <person name="Hole K."/>
            <person name="Larrea E."/>
            <person name="Timmerman E."/>
            <person name="Prieto J."/>
            <person name="Arnesen T."/>
            <person name="Sherman F."/>
            <person name="Gevaert K."/>
            <person name="Aldabe R."/>
        </authorList>
    </citation>
    <scope>IDENTIFICATION BY MASS SPECTROMETRY [LARGE SCALE ANALYSIS]</scope>
</reference>
<reference key="12">
    <citation type="journal article" date="2015" name="Nat. Commun.">
        <title>Organization of the mitochondrial translation machinery studied in situ by cryoelectron tomography.</title>
        <authorList>
            <person name="Pfeffer S."/>
            <person name="Woellhaf M.W."/>
            <person name="Herrmann J.M."/>
            <person name="Forster F."/>
        </authorList>
    </citation>
    <scope>SUBCELLULAR LOCATION</scope>
</reference>
<reference key="13">
    <citation type="journal article" date="2017" name="Science">
        <title>The structure of the yeast mitochondrial ribosome.</title>
        <authorList>
            <person name="Desai N."/>
            <person name="Brown A."/>
            <person name="Amunts A."/>
            <person name="Ramakrishnan V."/>
        </authorList>
    </citation>
    <scope>STRUCTURE BY ELECTRON MICROSCOPY (3.25 ANGSTROMS)</scope>
    <scope>SUBUNIT</scope>
</reference>
<proteinExistence type="evidence at protein level"/>
<evidence type="ECO:0000256" key="1">
    <source>
        <dbReference type="SAM" id="MobiDB-lite"/>
    </source>
</evidence>
<evidence type="ECO:0000269" key="2">
    <source>
    </source>
</evidence>
<evidence type="ECO:0000269" key="3">
    <source>
    </source>
</evidence>
<evidence type="ECO:0000269" key="4">
    <source>
    </source>
</evidence>
<evidence type="ECO:0000269" key="5">
    <source>
    </source>
</evidence>
<evidence type="ECO:0000269" key="6">
    <source>
    </source>
</evidence>
<evidence type="ECO:0000269" key="7">
    <source>
    </source>
</evidence>
<evidence type="ECO:0000269" key="8">
    <source>
    </source>
</evidence>
<evidence type="ECO:0000269" key="9">
    <source>
    </source>
</evidence>
<evidence type="ECO:0000303" key="10">
    <source>
    </source>
</evidence>
<evidence type="ECO:0000305" key="11"/>
<evidence type="ECO:0000305" key="12">
    <source>
    </source>
</evidence>
<evidence type="ECO:0000305" key="13">
    <source>
    </source>
</evidence>
<evidence type="ECO:0007829" key="14">
    <source>
        <dbReference type="PDB" id="8D8K"/>
    </source>
</evidence>
<evidence type="ECO:0007829" key="15">
    <source>
        <dbReference type="PDB" id="8D8L"/>
    </source>
</evidence>